<protein>
    <recommendedName>
        <fullName evidence="1">Large ribosomal subunit protein uL29</fullName>
    </recommendedName>
    <alternativeName>
        <fullName evidence="2">50S ribosomal protein L29</fullName>
    </alternativeName>
</protein>
<evidence type="ECO:0000255" key="1">
    <source>
        <dbReference type="HAMAP-Rule" id="MF_00374"/>
    </source>
</evidence>
<evidence type="ECO:0000305" key="2"/>
<accession>A7HWR9</accession>
<feature type="chain" id="PRO_1000072146" description="Large ribosomal subunit protein uL29">
    <location>
        <begin position="1"/>
        <end position="68"/>
    </location>
</feature>
<reference key="1">
    <citation type="journal article" date="2011" name="Stand. Genomic Sci.">
        <title>Complete genome sequence of Parvibaculum lavamentivorans type strain (DS-1(T)).</title>
        <authorList>
            <person name="Schleheck D."/>
            <person name="Weiss M."/>
            <person name="Pitluck S."/>
            <person name="Bruce D."/>
            <person name="Land M.L."/>
            <person name="Han S."/>
            <person name="Saunders E."/>
            <person name="Tapia R."/>
            <person name="Detter C."/>
            <person name="Brettin T."/>
            <person name="Han J."/>
            <person name="Woyke T."/>
            <person name="Goodwin L."/>
            <person name="Pennacchio L."/>
            <person name="Nolan M."/>
            <person name="Cook A.M."/>
            <person name="Kjelleberg S."/>
            <person name="Thomas T."/>
        </authorList>
    </citation>
    <scope>NUCLEOTIDE SEQUENCE [LARGE SCALE GENOMIC DNA]</scope>
    <source>
        <strain>DS-1 / DSM 13023 / NCIMB 13966</strain>
    </source>
</reference>
<keyword id="KW-1185">Reference proteome</keyword>
<keyword id="KW-0687">Ribonucleoprotein</keyword>
<keyword id="KW-0689">Ribosomal protein</keyword>
<name>RL29_PARL1</name>
<sequence>MKASDVRDMTPDQLQDELLKLKKTQFNLRFQGASGQLEKVHQMRQVRRDIARIKTIQRQRSAETASKS</sequence>
<proteinExistence type="inferred from homology"/>
<organism>
    <name type="scientific">Parvibaculum lavamentivorans (strain DS-1 / DSM 13023 / NCIMB 13966)</name>
    <dbReference type="NCBI Taxonomy" id="402881"/>
    <lineage>
        <taxon>Bacteria</taxon>
        <taxon>Pseudomonadati</taxon>
        <taxon>Pseudomonadota</taxon>
        <taxon>Alphaproteobacteria</taxon>
        <taxon>Hyphomicrobiales</taxon>
        <taxon>Parvibaculaceae</taxon>
        <taxon>Parvibaculum</taxon>
    </lineage>
</organism>
<comment type="similarity">
    <text evidence="1">Belongs to the universal ribosomal protein uL29 family.</text>
</comment>
<gene>
    <name evidence="1" type="primary">rpmC</name>
    <name type="ordered locus">Plav_2744</name>
</gene>
<dbReference type="EMBL" id="CP000774">
    <property type="protein sequence ID" value="ABS64352.1"/>
    <property type="molecule type" value="Genomic_DNA"/>
</dbReference>
<dbReference type="RefSeq" id="WP_012111666.1">
    <property type="nucleotide sequence ID" value="NC_009719.1"/>
</dbReference>
<dbReference type="SMR" id="A7HWR9"/>
<dbReference type="STRING" id="402881.Plav_2744"/>
<dbReference type="KEGG" id="pla:Plav_2744"/>
<dbReference type="eggNOG" id="COG0255">
    <property type="taxonomic scope" value="Bacteria"/>
</dbReference>
<dbReference type="HOGENOM" id="CLU_158491_1_0_5"/>
<dbReference type="OrthoDB" id="9815192at2"/>
<dbReference type="Proteomes" id="UP000006377">
    <property type="component" value="Chromosome"/>
</dbReference>
<dbReference type="GO" id="GO:0022625">
    <property type="term" value="C:cytosolic large ribosomal subunit"/>
    <property type="evidence" value="ECO:0007669"/>
    <property type="project" value="TreeGrafter"/>
</dbReference>
<dbReference type="GO" id="GO:0003735">
    <property type="term" value="F:structural constituent of ribosome"/>
    <property type="evidence" value="ECO:0007669"/>
    <property type="project" value="InterPro"/>
</dbReference>
<dbReference type="GO" id="GO:0006412">
    <property type="term" value="P:translation"/>
    <property type="evidence" value="ECO:0007669"/>
    <property type="project" value="UniProtKB-UniRule"/>
</dbReference>
<dbReference type="CDD" id="cd00427">
    <property type="entry name" value="Ribosomal_L29_HIP"/>
    <property type="match status" value="1"/>
</dbReference>
<dbReference type="FunFam" id="1.10.287.310:FF:000001">
    <property type="entry name" value="50S ribosomal protein L29"/>
    <property type="match status" value="1"/>
</dbReference>
<dbReference type="Gene3D" id="1.10.287.310">
    <property type="match status" value="1"/>
</dbReference>
<dbReference type="HAMAP" id="MF_00374">
    <property type="entry name" value="Ribosomal_uL29"/>
    <property type="match status" value="1"/>
</dbReference>
<dbReference type="InterPro" id="IPR050063">
    <property type="entry name" value="Ribosomal_protein_uL29"/>
</dbReference>
<dbReference type="InterPro" id="IPR001854">
    <property type="entry name" value="Ribosomal_uL29"/>
</dbReference>
<dbReference type="InterPro" id="IPR036049">
    <property type="entry name" value="Ribosomal_uL29_sf"/>
</dbReference>
<dbReference type="NCBIfam" id="TIGR00012">
    <property type="entry name" value="L29"/>
    <property type="match status" value="1"/>
</dbReference>
<dbReference type="PANTHER" id="PTHR10916">
    <property type="entry name" value="60S RIBOSOMAL PROTEIN L35/50S RIBOSOMAL PROTEIN L29"/>
    <property type="match status" value="1"/>
</dbReference>
<dbReference type="PANTHER" id="PTHR10916:SF0">
    <property type="entry name" value="LARGE RIBOSOMAL SUBUNIT PROTEIN UL29C"/>
    <property type="match status" value="1"/>
</dbReference>
<dbReference type="Pfam" id="PF00831">
    <property type="entry name" value="Ribosomal_L29"/>
    <property type="match status" value="1"/>
</dbReference>
<dbReference type="SUPFAM" id="SSF46561">
    <property type="entry name" value="Ribosomal protein L29 (L29p)"/>
    <property type="match status" value="1"/>
</dbReference>